<gene>
    <name type="ordered locus">sll0408</name>
</gene>
<feature type="signal peptide" evidence="2">
    <location>
        <begin position="1"/>
        <end position="33"/>
    </location>
</feature>
<feature type="chain" id="PRO_0000352737" description="Putative thylakoid lumen peptidyl-prolyl cis-trans isomerase sll0408">
    <location>
        <begin position="34"/>
        <end position="379"/>
    </location>
</feature>
<feature type="domain" description="PPIase cyclophilin-type" evidence="3">
    <location>
        <begin position="190"/>
        <end position="378"/>
    </location>
</feature>
<keyword id="KW-0413">Isomerase</keyword>
<keyword id="KW-1185">Reference proteome</keyword>
<keyword id="KW-0697">Rotamase</keyword>
<keyword id="KW-0732">Signal</keyword>
<keyword id="KW-0793">Thylakoid</keyword>
<proteinExistence type="inferred from homology"/>
<evidence type="ECO:0000250" key="1"/>
<evidence type="ECO:0000255" key="2"/>
<evidence type="ECO:0000255" key="3">
    <source>
        <dbReference type="PROSITE-ProRule" id="PRU00156"/>
    </source>
</evidence>
<evidence type="ECO:0000305" key="4"/>
<evidence type="ECO:0000305" key="5">
    <source>
    </source>
</evidence>
<protein>
    <recommendedName>
        <fullName>Putative thylakoid lumen peptidyl-prolyl cis-trans isomerase sll0408</fullName>
        <shortName>Putative thylakoid lumen PPIase</shortName>
        <ecNumber>5.2.1.8</ecNumber>
    </recommendedName>
    <alternativeName>
        <fullName>Putative thylakoid lumen rotamase</fullName>
    </alternativeName>
</protein>
<comment type="function">
    <text evidence="1">PPIases accelerate the folding of proteins. It catalyzes the cis-trans isomerization of proline imidic peptide bonds in oligopeptides. Required for the assembly and stabilization of PSII (By similarity).</text>
</comment>
<comment type="catalytic activity">
    <reaction>
        <text>[protein]-peptidylproline (omega=180) = [protein]-peptidylproline (omega=0)</text>
        <dbReference type="Rhea" id="RHEA:16237"/>
        <dbReference type="Rhea" id="RHEA-COMP:10747"/>
        <dbReference type="Rhea" id="RHEA-COMP:10748"/>
        <dbReference type="ChEBI" id="CHEBI:83833"/>
        <dbReference type="ChEBI" id="CHEBI:83834"/>
        <dbReference type="EC" id="5.2.1.8"/>
    </reaction>
</comment>
<comment type="subcellular location">
    <subcellularLocation>
        <location evidence="5">Cellular thylakoid lumen</location>
    </subcellularLocation>
</comment>
<comment type="sequence caution" evidence="4">
    <conflict type="erroneous initiation">
        <sequence resource="EMBL-CDS" id="BAA10250"/>
    </conflict>
</comment>
<accession>Q55118</accession>
<dbReference type="EC" id="5.2.1.8"/>
<dbReference type="EMBL" id="BA000022">
    <property type="protein sequence ID" value="BAA10250.1"/>
    <property type="status" value="ALT_INIT"/>
    <property type="molecule type" value="Genomic_DNA"/>
</dbReference>
<dbReference type="PIR" id="S74332">
    <property type="entry name" value="S74332"/>
</dbReference>
<dbReference type="SMR" id="Q55118"/>
<dbReference type="IntAct" id="Q55118">
    <property type="interactions" value="3"/>
</dbReference>
<dbReference type="STRING" id="1148.gene:10499749"/>
<dbReference type="PaxDb" id="1148-1001111"/>
<dbReference type="EnsemblBacteria" id="BAA10250">
    <property type="protein sequence ID" value="BAA10250"/>
    <property type="gene ID" value="BAA10250"/>
</dbReference>
<dbReference type="KEGG" id="syn:sll0408"/>
<dbReference type="eggNOG" id="COG0652">
    <property type="taxonomic scope" value="Bacteria"/>
</dbReference>
<dbReference type="InParanoid" id="Q55118"/>
<dbReference type="PhylomeDB" id="Q55118"/>
<dbReference type="Proteomes" id="UP000001425">
    <property type="component" value="Chromosome"/>
</dbReference>
<dbReference type="GO" id="GO:0031979">
    <property type="term" value="C:plasma membrane-derived thylakoid lumen"/>
    <property type="evidence" value="ECO:0007669"/>
    <property type="project" value="UniProtKB-SubCell"/>
</dbReference>
<dbReference type="GO" id="GO:0003755">
    <property type="term" value="F:peptidyl-prolyl cis-trans isomerase activity"/>
    <property type="evidence" value="ECO:0007669"/>
    <property type="project" value="UniProtKB-KW"/>
</dbReference>
<dbReference type="CDD" id="cd01924">
    <property type="entry name" value="cyclophilin_TLP40_like"/>
    <property type="match status" value="1"/>
</dbReference>
<dbReference type="Gene3D" id="2.40.100.10">
    <property type="entry name" value="Cyclophilin-like"/>
    <property type="match status" value="1"/>
</dbReference>
<dbReference type="Gene3D" id="1.20.120.290">
    <property type="entry name" value="Oxygen-evolving enhancer protein 3 (PsbQ), four-helix up-down bundle"/>
    <property type="match status" value="1"/>
</dbReference>
<dbReference type="InterPro" id="IPR029000">
    <property type="entry name" value="Cyclophilin-like_dom_sf"/>
</dbReference>
<dbReference type="InterPro" id="IPR002130">
    <property type="entry name" value="Cyclophilin-type_PPIase_dom"/>
</dbReference>
<dbReference type="InterPro" id="IPR048563">
    <property type="entry name" value="CYP38_PsbQ-like"/>
</dbReference>
<dbReference type="InterPro" id="IPR044665">
    <property type="entry name" value="E_coli_cyclophilin_A-like"/>
</dbReference>
<dbReference type="InterPro" id="IPR023222">
    <property type="entry name" value="PsbQ-like_dom_sf"/>
</dbReference>
<dbReference type="PANTHER" id="PTHR43246">
    <property type="entry name" value="PEPTIDYL-PROLYL CIS-TRANS ISOMERASE CYP38, CHLOROPLASTIC"/>
    <property type="match status" value="1"/>
</dbReference>
<dbReference type="Pfam" id="PF21329">
    <property type="entry name" value="CYP38_PsbQ-like"/>
    <property type="match status" value="1"/>
</dbReference>
<dbReference type="Pfam" id="PF00160">
    <property type="entry name" value="Pro_isomerase"/>
    <property type="match status" value="1"/>
</dbReference>
<dbReference type="SUPFAM" id="SSF50891">
    <property type="entry name" value="Cyclophilin-like"/>
    <property type="match status" value="1"/>
</dbReference>
<dbReference type="SUPFAM" id="SSF101112">
    <property type="entry name" value="Oxygen-evolving enhancer protein 3"/>
    <property type="match status" value="1"/>
</dbReference>
<dbReference type="PROSITE" id="PS50072">
    <property type="entry name" value="CSA_PPIASE_2"/>
    <property type="match status" value="1"/>
</dbReference>
<sequence length="379" mass="41386">MQIIKTPLGIITRRGLQLSLLSLLLTMLSLTWAMPGWSLPLNQPMLLGALAQGNAITDPNAILRYALPIDNPEVRRLQDSLEDISNHIRAKRWPAIKKDVRAANLTITLKEDKILAGVPADRQPEAETLLGSIKTDLTALTEAVEAKDKEQVISFRKSALTAIGDLEALMVTDFPFAIPEEFANLPQLKGRATVEMTTNKGPLTIVVDGYSAPINAGNFVDLVQRKFYDGLPFIRSEDFFVTQAGDPPGPEAGFIDPQTKEYRAIPLEILVKGEEGPIYGMTLEDAGMYLPELALPFNAYGAIALARPETEPNGGSSQFFFFKFDTELTPPGFNLMDGRYSVFGYVVDGKETLEQLSEGDKIVSAKVISGADNLVNGNS</sequence>
<organism>
    <name type="scientific">Synechocystis sp. (strain ATCC 27184 / PCC 6803 / Kazusa)</name>
    <dbReference type="NCBI Taxonomy" id="1111708"/>
    <lineage>
        <taxon>Bacteria</taxon>
        <taxon>Bacillati</taxon>
        <taxon>Cyanobacteriota</taxon>
        <taxon>Cyanophyceae</taxon>
        <taxon>Synechococcales</taxon>
        <taxon>Merismopediaceae</taxon>
        <taxon>Synechocystis</taxon>
    </lineage>
</organism>
<reference key="1">
    <citation type="journal article" date="1996" name="DNA Res.">
        <title>Sequence analysis of the genome of the unicellular cyanobacterium Synechocystis sp. strain PCC6803. II. Sequence determination of the entire genome and assignment of potential protein-coding regions.</title>
        <authorList>
            <person name="Kaneko T."/>
            <person name="Sato S."/>
            <person name="Kotani H."/>
            <person name="Tanaka A."/>
            <person name="Asamizu E."/>
            <person name="Nakamura Y."/>
            <person name="Miyajima N."/>
            <person name="Hirosawa M."/>
            <person name="Sugiura M."/>
            <person name="Sasamoto S."/>
            <person name="Kimura T."/>
            <person name="Hosouchi T."/>
            <person name="Matsuno A."/>
            <person name="Muraki A."/>
            <person name="Nakazaki N."/>
            <person name="Naruo K."/>
            <person name="Okumura S."/>
            <person name="Shimpo S."/>
            <person name="Takeuchi C."/>
            <person name="Wada T."/>
            <person name="Watanabe A."/>
            <person name="Yamada M."/>
            <person name="Yasuda M."/>
            <person name="Tabata S."/>
        </authorList>
    </citation>
    <scope>NUCLEOTIDE SEQUENCE [LARGE SCALE GENOMIC DNA]</scope>
    <source>
        <strain>ATCC 27184 / PCC 6803 / Kazusa</strain>
    </source>
</reference>
<reference key="2">
    <citation type="journal article" date="2005" name="Proteomics">
        <title>Proteomic studies of the thylakoid membrane of Synechocystis sp. PCC 6803.</title>
        <authorList>
            <person name="Srivastava R."/>
            <person name="Pisareva T."/>
            <person name="Norling B."/>
        </authorList>
    </citation>
    <scope>SUBCELLULAR LOCATION IN THYLAKOID</scope>
</reference>
<name>PPI3_SYNY3</name>